<keyword id="KW-0963">Cytoplasm</keyword>
<keyword id="KW-0460">Magnesium</keyword>
<keyword id="KW-0479">Metal-binding</keyword>
<keyword id="KW-0566">Pantothenate biosynthesis</keyword>
<keyword id="KW-1185">Reference proteome</keyword>
<keyword id="KW-0808">Transferase</keyword>
<comment type="function">
    <text evidence="1">Catalyzes the reversible reaction in which hydroxymethyl group from 5,10-methylenetetrahydrofolate is transferred onto alpha-ketoisovalerate to form ketopantoate.</text>
</comment>
<comment type="catalytic activity">
    <reaction evidence="1">
        <text>3-methyl-2-oxobutanoate + (6R)-5,10-methylene-5,6,7,8-tetrahydrofolate + H2O = 2-dehydropantoate + (6S)-5,6,7,8-tetrahydrofolate</text>
        <dbReference type="Rhea" id="RHEA:11824"/>
        <dbReference type="ChEBI" id="CHEBI:11561"/>
        <dbReference type="ChEBI" id="CHEBI:11851"/>
        <dbReference type="ChEBI" id="CHEBI:15377"/>
        <dbReference type="ChEBI" id="CHEBI:15636"/>
        <dbReference type="ChEBI" id="CHEBI:57453"/>
        <dbReference type="EC" id="2.1.2.11"/>
    </reaction>
</comment>
<comment type="cofactor">
    <cofactor evidence="1">
        <name>Mg(2+)</name>
        <dbReference type="ChEBI" id="CHEBI:18420"/>
    </cofactor>
    <text evidence="1">Binds 1 Mg(2+) ion per subunit.</text>
</comment>
<comment type="pathway">
    <text evidence="1">Cofactor biosynthesis; (R)-pantothenate biosynthesis; (R)-pantoate from 3-methyl-2-oxobutanoate: step 1/2.</text>
</comment>
<comment type="subunit">
    <text evidence="1">Homodecamer; pentamer of dimers.</text>
</comment>
<comment type="subcellular location">
    <subcellularLocation>
        <location evidence="1">Cytoplasm</location>
    </subcellularLocation>
</comment>
<comment type="similarity">
    <text evidence="1">Belongs to the PanB family.</text>
</comment>
<dbReference type="EC" id="2.1.2.11" evidence="1"/>
<dbReference type="EMBL" id="CP000510">
    <property type="protein sequence ID" value="ABM02434.1"/>
    <property type="molecule type" value="Genomic_DNA"/>
</dbReference>
<dbReference type="RefSeq" id="WP_011768993.1">
    <property type="nucleotide sequence ID" value="NC_008709.1"/>
</dbReference>
<dbReference type="SMR" id="A1SSG9"/>
<dbReference type="STRING" id="357804.Ping_0580"/>
<dbReference type="KEGG" id="pin:Ping_0580"/>
<dbReference type="eggNOG" id="COG0413">
    <property type="taxonomic scope" value="Bacteria"/>
</dbReference>
<dbReference type="HOGENOM" id="CLU_036645_1_0_6"/>
<dbReference type="OrthoDB" id="9781789at2"/>
<dbReference type="UniPathway" id="UPA00028">
    <property type="reaction ID" value="UER00003"/>
</dbReference>
<dbReference type="Proteomes" id="UP000000639">
    <property type="component" value="Chromosome"/>
</dbReference>
<dbReference type="GO" id="GO:0005737">
    <property type="term" value="C:cytoplasm"/>
    <property type="evidence" value="ECO:0007669"/>
    <property type="project" value="UniProtKB-SubCell"/>
</dbReference>
<dbReference type="GO" id="GO:0003864">
    <property type="term" value="F:3-methyl-2-oxobutanoate hydroxymethyltransferase activity"/>
    <property type="evidence" value="ECO:0007669"/>
    <property type="project" value="UniProtKB-UniRule"/>
</dbReference>
<dbReference type="GO" id="GO:0000287">
    <property type="term" value="F:magnesium ion binding"/>
    <property type="evidence" value="ECO:0007669"/>
    <property type="project" value="TreeGrafter"/>
</dbReference>
<dbReference type="GO" id="GO:0015940">
    <property type="term" value="P:pantothenate biosynthetic process"/>
    <property type="evidence" value="ECO:0007669"/>
    <property type="project" value="UniProtKB-UniRule"/>
</dbReference>
<dbReference type="CDD" id="cd06557">
    <property type="entry name" value="KPHMT-like"/>
    <property type="match status" value="1"/>
</dbReference>
<dbReference type="FunFam" id="3.20.20.60:FF:000003">
    <property type="entry name" value="3-methyl-2-oxobutanoate hydroxymethyltransferase"/>
    <property type="match status" value="1"/>
</dbReference>
<dbReference type="Gene3D" id="3.20.20.60">
    <property type="entry name" value="Phosphoenolpyruvate-binding domains"/>
    <property type="match status" value="1"/>
</dbReference>
<dbReference type="HAMAP" id="MF_00156">
    <property type="entry name" value="PanB"/>
    <property type="match status" value="1"/>
</dbReference>
<dbReference type="InterPro" id="IPR003700">
    <property type="entry name" value="Pantoate_hydroxy_MeTrfase"/>
</dbReference>
<dbReference type="InterPro" id="IPR015813">
    <property type="entry name" value="Pyrv/PenolPyrv_kinase-like_dom"/>
</dbReference>
<dbReference type="InterPro" id="IPR040442">
    <property type="entry name" value="Pyrv_kinase-like_dom_sf"/>
</dbReference>
<dbReference type="NCBIfam" id="TIGR00222">
    <property type="entry name" value="panB"/>
    <property type="match status" value="1"/>
</dbReference>
<dbReference type="NCBIfam" id="NF001452">
    <property type="entry name" value="PRK00311.1"/>
    <property type="match status" value="1"/>
</dbReference>
<dbReference type="PANTHER" id="PTHR20881">
    <property type="entry name" value="3-METHYL-2-OXOBUTANOATE HYDROXYMETHYLTRANSFERASE"/>
    <property type="match status" value="1"/>
</dbReference>
<dbReference type="PANTHER" id="PTHR20881:SF0">
    <property type="entry name" value="3-METHYL-2-OXOBUTANOATE HYDROXYMETHYLTRANSFERASE"/>
    <property type="match status" value="1"/>
</dbReference>
<dbReference type="Pfam" id="PF02548">
    <property type="entry name" value="Pantoate_transf"/>
    <property type="match status" value="1"/>
</dbReference>
<dbReference type="PIRSF" id="PIRSF000388">
    <property type="entry name" value="Pantoate_hydroxy_MeTrfase"/>
    <property type="match status" value="1"/>
</dbReference>
<dbReference type="SUPFAM" id="SSF51621">
    <property type="entry name" value="Phosphoenolpyruvate/pyruvate domain"/>
    <property type="match status" value="1"/>
</dbReference>
<feature type="chain" id="PRO_0000297345" description="3-methyl-2-oxobutanoate hydroxymethyltransferase">
    <location>
        <begin position="1"/>
        <end position="264"/>
    </location>
</feature>
<feature type="active site" description="Proton acceptor" evidence="1">
    <location>
        <position position="181"/>
    </location>
</feature>
<feature type="binding site" evidence="1">
    <location>
        <begin position="45"/>
        <end position="46"/>
    </location>
    <ligand>
        <name>3-methyl-2-oxobutanoate</name>
        <dbReference type="ChEBI" id="CHEBI:11851"/>
    </ligand>
</feature>
<feature type="binding site" evidence="1">
    <location>
        <position position="45"/>
    </location>
    <ligand>
        <name>Mg(2+)</name>
        <dbReference type="ChEBI" id="CHEBI:18420"/>
    </ligand>
</feature>
<feature type="binding site" evidence="1">
    <location>
        <position position="84"/>
    </location>
    <ligand>
        <name>3-methyl-2-oxobutanoate</name>
        <dbReference type="ChEBI" id="CHEBI:11851"/>
    </ligand>
</feature>
<feature type="binding site" evidence="1">
    <location>
        <position position="84"/>
    </location>
    <ligand>
        <name>Mg(2+)</name>
        <dbReference type="ChEBI" id="CHEBI:18420"/>
    </ligand>
</feature>
<feature type="binding site" evidence="1">
    <location>
        <position position="112"/>
    </location>
    <ligand>
        <name>3-methyl-2-oxobutanoate</name>
        <dbReference type="ChEBI" id="CHEBI:11851"/>
    </ligand>
</feature>
<feature type="binding site" evidence="1">
    <location>
        <position position="114"/>
    </location>
    <ligand>
        <name>Mg(2+)</name>
        <dbReference type="ChEBI" id="CHEBI:18420"/>
    </ligand>
</feature>
<protein>
    <recommendedName>
        <fullName evidence="1">3-methyl-2-oxobutanoate hydroxymethyltransferase</fullName>
        <ecNumber evidence="1">2.1.2.11</ecNumber>
    </recommendedName>
    <alternativeName>
        <fullName evidence="1">Ketopantoate hydroxymethyltransferase</fullName>
        <shortName evidence="1">KPHMT</shortName>
    </alternativeName>
</protein>
<gene>
    <name evidence="1" type="primary">panB</name>
    <name type="ordered locus">Ping_0580</name>
</gene>
<name>PANB_PSYIN</name>
<evidence type="ECO:0000255" key="1">
    <source>
        <dbReference type="HAMAP-Rule" id="MF_00156"/>
    </source>
</evidence>
<organism>
    <name type="scientific">Psychromonas ingrahamii (strain DSM 17664 / CCUG 51855 / 37)</name>
    <dbReference type="NCBI Taxonomy" id="357804"/>
    <lineage>
        <taxon>Bacteria</taxon>
        <taxon>Pseudomonadati</taxon>
        <taxon>Pseudomonadota</taxon>
        <taxon>Gammaproteobacteria</taxon>
        <taxon>Alteromonadales</taxon>
        <taxon>Psychromonadaceae</taxon>
        <taxon>Psychromonas</taxon>
    </lineage>
</organism>
<proteinExistence type="inferred from homology"/>
<sequence>MAKISVSRLTKMKQDNQKITCMTAYDASFAAIFDQAGIQVLLVGDSLGMVLQGHDSTLPVTVDDIRYHTAAVVSTAKSAFIIADLPFMSYSTPEMSYENAAILMRAGANMVKMEGGEWLTDSVKGLVERGIPVCGHLGLTPQSVNIFGGYKVQGREEEQADELLNDALLLQEAGIQLLVLECVPVSLADRITTALKIPVIGIGAGCETDGQILVMHDAFGVSAGFCPKFSKNFLLETGDIRQAVTLYIDQVESRQFPSAEHSFY</sequence>
<accession>A1SSG9</accession>
<reference key="1">
    <citation type="journal article" date="2008" name="BMC Genomics">
        <title>Genomics of an extreme psychrophile, Psychromonas ingrahamii.</title>
        <authorList>
            <person name="Riley M."/>
            <person name="Staley J.T."/>
            <person name="Danchin A."/>
            <person name="Wang T.Z."/>
            <person name="Brettin T.S."/>
            <person name="Hauser L.J."/>
            <person name="Land M.L."/>
            <person name="Thompson L.S."/>
        </authorList>
    </citation>
    <scope>NUCLEOTIDE SEQUENCE [LARGE SCALE GENOMIC DNA]</scope>
    <source>
        <strain>DSM 17664 / CCUG 51855 / 37</strain>
    </source>
</reference>